<sequence length="263" mass="27763">MKNAFKDALKAGRPQIGLWLGLANSYSAELLAGAGFDWLLIDGEHAPNNVQTVLTQLQAIASYPSQPVVRPSWNDPVQIKQLLDVGAQTLLIPMVQNADEARNAVAATRYPPAGIRGVGSALARASRWNRIPDYLHQANDAMCVLVQIETREAMSNLASILDVDGIDGVFIGPADLSADMGFAGNPQHPEVQAAIENAIVQIRAAGKAPGILMANEALAKRYLELGALFVAVGVDTTLLARGAEALAARFGAEKNLSGASGVY</sequence>
<reference key="1">
    <citation type="journal article" date="2011" name="J. Bacteriol.">
        <title>Comparative genomics of 28 Salmonella enterica isolates: evidence for CRISPR-mediated adaptive sublineage evolution.</title>
        <authorList>
            <person name="Fricke W.F."/>
            <person name="Mammel M.K."/>
            <person name="McDermott P.F."/>
            <person name="Tartera C."/>
            <person name="White D.G."/>
            <person name="Leclerc J.E."/>
            <person name="Ravel J."/>
            <person name="Cebula T.A."/>
        </authorList>
    </citation>
    <scope>NUCLEOTIDE SEQUENCE [LARGE SCALE GENOMIC DNA]</scope>
    <source>
        <strain>CT_02021853</strain>
    </source>
</reference>
<proteinExistence type="inferred from homology"/>
<comment type="function">
    <text evidence="1">Catalyzes the reversible retro-aldol cleavage of 4-hydroxy-2-ketoheptane-1,7-dioate (HKHD) to pyruvate and succinic semialdehyde.</text>
</comment>
<comment type="catalytic activity">
    <reaction evidence="1">
        <text>4-hydroxy-2-oxoheptanedioate = succinate semialdehyde + pyruvate</text>
        <dbReference type="Rhea" id="RHEA:25788"/>
        <dbReference type="ChEBI" id="CHEBI:15361"/>
        <dbReference type="ChEBI" id="CHEBI:57706"/>
        <dbReference type="ChEBI" id="CHEBI:73036"/>
        <dbReference type="EC" id="4.1.2.52"/>
    </reaction>
</comment>
<comment type="cofactor">
    <cofactor evidence="1">
        <name>a divalent metal cation</name>
        <dbReference type="ChEBI" id="CHEBI:60240"/>
    </cofactor>
    <text evidence="1">Binds 1 divalent metal cation per subunit.</text>
</comment>
<comment type="pathway">
    <text evidence="1">Aromatic compound metabolism; 4-hydroxyphenylacetate degradation; pyruvate and succinate semialdehyde from 4-hydroxyphenylacetate: step 7/7.</text>
</comment>
<comment type="subunit">
    <text evidence="1">Homohexamer; trimer of dimers.</text>
</comment>
<comment type="similarity">
    <text evidence="1">Belongs to the HpcH/HpaI aldolase family.</text>
</comment>
<organism>
    <name type="scientific">Salmonella dublin (strain CT_02021853)</name>
    <dbReference type="NCBI Taxonomy" id="439851"/>
    <lineage>
        <taxon>Bacteria</taxon>
        <taxon>Pseudomonadati</taxon>
        <taxon>Pseudomonadota</taxon>
        <taxon>Gammaproteobacteria</taxon>
        <taxon>Enterobacterales</taxon>
        <taxon>Enterobacteriaceae</taxon>
        <taxon>Salmonella</taxon>
    </lineage>
</organism>
<evidence type="ECO:0000255" key="1">
    <source>
        <dbReference type="HAMAP-Rule" id="MF_01292"/>
    </source>
</evidence>
<accession>B5FR34</accession>
<name>HPCH_SALDC</name>
<dbReference type="EC" id="4.1.2.52" evidence="1"/>
<dbReference type="EMBL" id="CP001144">
    <property type="protein sequence ID" value="ACH77862.1"/>
    <property type="molecule type" value="Genomic_DNA"/>
</dbReference>
<dbReference type="RefSeq" id="WP_000785077.1">
    <property type="nucleotide sequence ID" value="NC_011205.1"/>
</dbReference>
<dbReference type="SMR" id="B5FR34"/>
<dbReference type="KEGG" id="sed:SeD_A1181"/>
<dbReference type="HOGENOM" id="CLU_059964_1_0_6"/>
<dbReference type="UniPathway" id="UPA00208">
    <property type="reaction ID" value="UER00422"/>
</dbReference>
<dbReference type="Proteomes" id="UP000008322">
    <property type="component" value="Chromosome"/>
</dbReference>
<dbReference type="GO" id="GO:0005737">
    <property type="term" value="C:cytoplasm"/>
    <property type="evidence" value="ECO:0007669"/>
    <property type="project" value="TreeGrafter"/>
</dbReference>
<dbReference type="GO" id="GO:0043863">
    <property type="term" value="F:4-hydroxy-2-ketopimelate aldolase activity"/>
    <property type="evidence" value="ECO:0007669"/>
    <property type="project" value="RHEA"/>
</dbReference>
<dbReference type="GO" id="GO:0046872">
    <property type="term" value="F:metal ion binding"/>
    <property type="evidence" value="ECO:0007669"/>
    <property type="project" value="UniProtKB-UniRule"/>
</dbReference>
<dbReference type="GO" id="GO:1901023">
    <property type="term" value="P:4-hydroxyphenylacetate catabolic process"/>
    <property type="evidence" value="ECO:0007669"/>
    <property type="project" value="UniProtKB-UniRule"/>
</dbReference>
<dbReference type="GO" id="GO:0010124">
    <property type="term" value="P:phenylacetate catabolic process"/>
    <property type="evidence" value="ECO:0007669"/>
    <property type="project" value="InterPro"/>
</dbReference>
<dbReference type="FunFam" id="3.20.20.60:FF:000004">
    <property type="entry name" value="5-keto-4-deoxy-D-glucarate aldolase"/>
    <property type="match status" value="1"/>
</dbReference>
<dbReference type="Gene3D" id="3.20.20.60">
    <property type="entry name" value="Phosphoenolpyruvate-binding domains"/>
    <property type="match status" value="1"/>
</dbReference>
<dbReference type="HAMAP" id="MF_01292">
    <property type="entry name" value="HKHD_aldolase"/>
    <property type="match status" value="1"/>
</dbReference>
<dbReference type="InterPro" id="IPR005000">
    <property type="entry name" value="Aldolase/citrate-lyase_domain"/>
</dbReference>
<dbReference type="InterPro" id="IPR023701">
    <property type="entry name" value="HKHD_aldolase_ent"/>
</dbReference>
<dbReference type="InterPro" id="IPR012689">
    <property type="entry name" value="HpaI"/>
</dbReference>
<dbReference type="InterPro" id="IPR050251">
    <property type="entry name" value="HpcH-HpaI_aldolase"/>
</dbReference>
<dbReference type="InterPro" id="IPR015813">
    <property type="entry name" value="Pyrv/PenolPyrv_kinase-like_dom"/>
</dbReference>
<dbReference type="InterPro" id="IPR040442">
    <property type="entry name" value="Pyrv_kinase-like_dom_sf"/>
</dbReference>
<dbReference type="NCBIfam" id="TIGR02311">
    <property type="entry name" value="HpaI"/>
    <property type="match status" value="1"/>
</dbReference>
<dbReference type="PANTHER" id="PTHR30502">
    <property type="entry name" value="2-KETO-3-DEOXY-L-RHAMNONATE ALDOLASE"/>
    <property type="match status" value="1"/>
</dbReference>
<dbReference type="PANTHER" id="PTHR30502:SF0">
    <property type="entry name" value="PHOSPHOENOLPYRUVATE CARBOXYLASE FAMILY PROTEIN"/>
    <property type="match status" value="1"/>
</dbReference>
<dbReference type="Pfam" id="PF03328">
    <property type="entry name" value="HpcH_HpaI"/>
    <property type="match status" value="1"/>
</dbReference>
<dbReference type="SUPFAM" id="SSF51621">
    <property type="entry name" value="Phosphoenolpyruvate/pyruvate domain"/>
    <property type="match status" value="1"/>
</dbReference>
<protein>
    <recommendedName>
        <fullName evidence="1">4-hydroxy-2-oxo-heptane-1,7-dioate aldolase</fullName>
        <ecNumber evidence="1">4.1.2.52</ecNumber>
    </recommendedName>
    <alternativeName>
        <fullName evidence="1">2,4-dihydroxyhept-2-ene-1,7-dioic acid aldolase</fullName>
        <shortName evidence="1">HHED aldolase</shortName>
    </alternativeName>
    <alternativeName>
        <fullName evidence="1">4-hydroxy-2-ketoheptane-1,7-dioate aldolase</fullName>
        <shortName evidence="1">HKHD aldolase</shortName>
    </alternativeName>
</protein>
<feature type="chain" id="PRO_1000140421" description="4-hydroxy-2-oxo-heptane-1,7-dioate aldolase">
    <location>
        <begin position="1"/>
        <end position="263"/>
    </location>
</feature>
<feature type="active site" description="Proton acceptor" evidence="1">
    <location>
        <position position="45"/>
    </location>
</feature>
<feature type="binding site" evidence="1">
    <location>
        <position position="147"/>
    </location>
    <ligand>
        <name>substrate</name>
    </ligand>
</feature>
<feature type="binding site" evidence="1">
    <location>
        <position position="149"/>
    </location>
    <ligand>
        <name>a divalent metal cation</name>
        <dbReference type="ChEBI" id="CHEBI:60240"/>
    </ligand>
</feature>
<feature type="binding site" evidence="1">
    <location>
        <position position="174"/>
    </location>
    <ligand>
        <name>substrate</name>
    </ligand>
</feature>
<feature type="binding site" evidence="1">
    <location>
        <position position="175"/>
    </location>
    <ligand>
        <name>a divalent metal cation</name>
        <dbReference type="ChEBI" id="CHEBI:60240"/>
    </ligand>
</feature>
<feature type="binding site" evidence="1">
    <location>
        <position position="175"/>
    </location>
    <ligand>
        <name>substrate</name>
    </ligand>
</feature>
<feature type="site" description="Transition state stabilizer" evidence="1">
    <location>
        <position position="70"/>
    </location>
</feature>
<feature type="site" description="Increases basicity of active site His" evidence="1">
    <location>
        <position position="84"/>
    </location>
</feature>
<gene>
    <name evidence="1" type="primary">hpcH</name>
    <name evidence="1" type="synonym">hpaI</name>
    <name type="ordered locus">SeD_A1181</name>
</gene>
<keyword id="KW-0058">Aromatic hydrocarbons catabolism</keyword>
<keyword id="KW-0456">Lyase</keyword>
<keyword id="KW-0479">Metal-binding</keyword>